<gene>
    <name type="ordered locus">Os03g0767500</name>
    <name type="ordered locus">LOC_Os03g55820</name>
    <name type="ORF">OSJNBa0079B15.5</name>
    <name type="ORF">OSJNBb0106M04.22</name>
</gene>
<reference key="1">
    <citation type="journal article" date="2005" name="Genome Res.">
        <title>Sequence, annotation, and analysis of synteny between rice chromosome 3 and diverged grass species.</title>
        <authorList>
            <consortium name="The rice chromosome 3 sequencing consortium"/>
            <person name="Buell C.R."/>
            <person name="Yuan Q."/>
            <person name="Ouyang S."/>
            <person name="Liu J."/>
            <person name="Zhu W."/>
            <person name="Wang A."/>
            <person name="Maiti R."/>
            <person name="Haas B."/>
            <person name="Wortman J."/>
            <person name="Pertea M."/>
            <person name="Jones K.M."/>
            <person name="Kim M."/>
            <person name="Overton L."/>
            <person name="Tsitrin T."/>
            <person name="Fadrosh D."/>
            <person name="Bera J."/>
            <person name="Weaver B."/>
            <person name="Jin S."/>
            <person name="Johri S."/>
            <person name="Reardon M."/>
            <person name="Webb K."/>
            <person name="Hill J."/>
            <person name="Moffat K."/>
            <person name="Tallon L."/>
            <person name="Van Aken S."/>
            <person name="Lewis M."/>
            <person name="Utterback T."/>
            <person name="Feldblyum T."/>
            <person name="Zismann V."/>
            <person name="Iobst S."/>
            <person name="Hsiao J."/>
            <person name="de Vazeille A.R."/>
            <person name="Salzberg S.L."/>
            <person name="White O."/>
            <person name="Fraser C.M."/>
            <person name="Yu Y."/>
            <person name="Kim H."/>
            <person name="Rambo T."/>
            <person name="Currie J."/>
            <person name="Collura K."/>
            <person name="Kernodle-Thompson S."/>
            <person name="Wei F."/>
            <person name="Kudrna K."/>
            <person name="Ammiraju J.S.S."/>
            <person name="Luo M."/>
            <person name="Goicoechea J.L."/>
            <person name="Wing R.A."/>
            <person name="Henry D."/>
            <person name="Oates R."/>
            <person name="Palmer M."/>
            <person name="Pries G."/>
            <person name="Saski C."/>
            <person name="Simmons J."/>
            <person name="Soderlund C."/>
            <person name="Nelson W."/>
            <person name="de la Bastide M."/>
            <person name="Spiegel L."/>
            <person name="Nascimento L."/>
            <person name="Huang E."/>
            <person name="Preston R."/>
            <person name="Zutavern T."/>
            <person name="Palmer L."/>
            <person name="O'Shaughnessy A."/>
            <person name="Dike S."/>
            <person name="McCombie W.R."/>
            <person name="Minx P."/>
            <person name="Cordum H."/>
            <person name="Wilson R."/>
            <person name="Jin W."/>
            <person name="Lee H.R."/>
            <person name="Jiang J."/>
            <person name="Jackson S."/>
        </authorList>
    </citation>
    <scope>NUCLEOTIDE SEQUENCE [LARGE SCALE GENOMIC DNA]</scope>
    <source>
        <strain>cv. Nipponbare</strain>
    </source>
</reference>
<reference key="2">
    <citation type="journal article" date="2005" name="Nature">
        <title>The map-based sequence of the rice genome.</title>
        <authorList>
            <consortium name="International rice genome sequencing project (IRGSP)"/>
        </authorList>
    </citation>
    <scope>NUCLEOTIDE SEQUENCE [LARGE SCALE GENOMIC DNA]</scope>
    <source>
        <strain>cv. Nipponbare</strain>
    </source>
</reference>
<reference key="3">
    <citation type="journal article" date="2008" name="Nucleic Acids Res.">
        <title>The rice annotation project database (RAP-DB): 2008 update.</title>
        <authorList>
            <consortium name="The rice annotation project (RAP)"/>
        </authorList>
    </citation>
    <scope>GENOME REANNOTATION</scope>
    <source>
        <strain>cv. Nipponbare</strain>
    </source>
</reference>
<reference key="4">
    <citation type="journal article" date="2013" name="Rice">
        <title>Improvement of the Oryza sativa Nipponbare reference genome using next generation sequence and optical map data.</title>
        <authorList>
            <person name="Kawahara Y."/>
            <person name="de la Bastide M."/>
            <person name="Hamilton J.P."/>
            <person name="Kanamori H."/>
            <person name="McCombie W.R."/>
            <person name="Ouyang S."/>
            <person name="Schwartz D.C."/>
            <person name="Tanaka T."/>
            <person name="Wu J."/>
            <person name="Zhou S."/>
            <person name="Childs K.L."/>
            <person name="Davidson R.M."/>
            <person name="Lin H."/>
            <person name="Quesada-Ocampo L."/>
            <person name="Vaillancourt B."/>
            <person name="Sakai H."/>
            <person name="Lee S.S."/>
            <person name="Kim J."/>
            <person name="Numa H."/>
            <person name="Itoh T."/>
            <person name="Buell C.R."/>
            <person name="Matsumoto T."/>
        </authorList>
    </citation>
    <scope>GENOME REANNOTATION</scope>
    <source>
        <strain>cv. Nipponbare</strain>
    </source>
</reference>
<reference key="5">
    <citation type="journal article" date="2003" name="Science">
        <title>Collection, mapping, and annotation of over 28,000 cDNA clones from japonica rice.</title>
        <authorList>
            <consortium name="The rice full-length cDNA consortium"/>
        </authorList>
    </citation>
    <scope>NUCLEOTIDE SEQUENCE [LARGE SCALE MRNA]</scope>
    <source>
        <strain>cv. Nipponbare</strain>
    </source>
</reference>
<reference key="6">
    <citation type="journal article" date="2009" name="Mol. Plant">
        <title>Comparative genomic study of the thioredoxin family in photosynthetic organisms with emphasis on Populus trichocarpa.</title>
        <authorList>
            <person name="Chibani K."/>
            <person name="Wingsle G."/>
            <person name="Jacquot J.P."/>
            <person name="Gelhaye E."/>
            <person name="Rouhier N."/>
        </authorList>
    </citation>
    <scope>GENE FAMILY</scope>
    <scope>NOMENCLATURE</scope>
</reference>
<proteinExistence type="evidence at transcript level"/>
<keyword id="KW-0150">Chloroplast</keyword>
<keyword id="KW-1015">Disulfide bond</keyword>
<keyword id="KW-0249">Electron transport</keyword>
<keyword id="KW-0934">Plastid</keyword>
<keyword id="KW-0676">Redox-active center</keyword>
<keyword id="KW-1185">Reference proteome</keyword>
<keyword id="KW-0809">Transit peptide</keyword>
<keyword id="KW-0813">Transport</keyword>
<protein>
    <recommendedName>
        <fullName>Thioredoxin-like protein HCF164, chloroplastic</fullName>
    </recommendedName>
    <alternativeName>
        <fullName>Protein HIGH CHLOROPHYLL FLUORESCENCE 164</fullName>
    </alternativeName>
</protein>
<name>TR164_ORYSJ</name>
<feature type="transit peptide" description="Chloroplast" evidence="1">
    <location>
        <begin position="1"/>
        <end position="54"/>
    </location>
</feature>
<feature type="chain" id="PRO_0000394843" description="Thioredoxin-like protein HCF164, chloroplastic">
    <location>
        <begin position="55"/>
        <end position="262"/>
    </location>
</feature>
<feature type="domain" description="Thioredoxin" evidence="2">
    <location>
        <begin position="78"/>
        <end position="230"/>
    </location>
</feature>
<feature type="region of interest" description="Disordered" evidence="3">
    <location>
        <begin position="47"/>
        <end position="90"/>
    </location>
</feature>
<feature type="compositionally biased region" description="Basic and acidic residues" evidence="3">
    <location>
        <begin position="64"/>
        <end position="76"/>
    </location>
</feature>
<feature type="compositionally biased region" description="Polar residues" evidence="3">
    <location>
        <begin position="78"/>
        <end position="89"/>
    </location>
</feature>
<feature type="active site" description="Nucleophile" evidence="1">
    <location>
        <position position="151"/>
    </location>
</feature>
<feature type="active site" description="Nucleophile" evidence="1">
    <location>
        <position position="154"/>
    </location>
</feature>
<feature type="disulfide bond" description="Redox-active" evidence="2">
    <location>
        <begin position="151"/>
        <end position="154"/>
    </location>
</feature>
<sequence length="262" mass="28572">MAVVASRCTGLLLPDLGASLAGFRRRRSTPASSLSFRPRRARRRLGSLSCIAPPDSAEPQTDEPAAKDDSTEDKAEASSASQDAGNPTFPNKDLSRRIALASTIGAVGLFAYQRLDFGGVSLKDLAANATPYEEALSNGKPTVVEFYADWCEVCRELAPDVYKVEQQYKDRVNFVMLNVDNTKWEQELDEFGVEGIPHFAFLDKEGNEEGNVVGRLPKQYFLDNVVALASGEPTVPHARVVGQFSSAESRKVHQVADPRSHG</sequence>
<dbReference type="EMBL" id="AC099043">
    <property type="protein sequence ID" value="AAP50950.1"/>
    <property type="molecule type" value="Genomic_DNA"/>
</dbReference>
<dbReference type="EMBL" id="AC107207">
    <property type="protein sequence ID" value="AAR87322.1"/>
    <property type="molecule type" value="Genomic_DNA"/>
</dbReference>
<dbReference type="EMBL" id="DP000009">
    <property type="protein sequence ID" value="ABF99061.1"/>
    <property type="molecule type" value="Genomic_DNA"/>
</dbReference>
<dbReference type="EMBL" id="AP008209">
    <property type="protein sequence ID" value="BAF13301.1"/>
    <property type="molecule type" value="Genomic_DNA"/>
</dbReference>
<dbReference type="EMBL" id="AP014959">
    <property type="protein sequence ID" value="BAS86566.1"/>
    <property type="molecule type" value="Genomic_DNA"/>
</dbReference>
<dbReference type="EMBL" id="AK098932">
    <property type="protein sequence ID" value="BAG93818.1"/>
    <property type="molecule type" value="mRNA"/>
</dbReference>
<dbReference type="EMBL" id="AK104279">
    <property type="protein sequence ID" value="BAG96565.1"/>
    <property type="molecule type" value="mRNA"/>
</dbReference>
<dbReference type="RefSeq" id="XP_015630895.1">
    <property type="nucleotide sequence ID" value="XM_015775409.1"/>
</dbReference>
<dbReference type="SMR" id="Q7Y0D4"/>
<dbReference type="FunCoup" id="Q7Y0D4">
    <property type="interactions" value="920"/>
</dbReference>
<dbReference type="STRING" id="39947.Q7Y0D4"/>
<dbReference type="PaxDb" id="39947-Q7Y0D4"/>
<dbReference type="EnsemblPlants" id="Os03t0767500-01">
    <property type="protein sequence ID" value="Os03t0767500-01"/>
    <property type="gene ID" value="Os03g0767500"/>
</dbReference>
<dbReference type="Gramene" id="Os03t0767500-01">
    <property type="protein sequence ID" value="Os03t0767500-01"/>
    <property type="gene ID" value="Os03g0767500"/>
</dbReference>
<dbReference type="KEGG" id="dosa:Os03g0767500"/>
<dbReference type="eggNOG" id="KOG0907">
    <property type="taxonomic scope" value="Eukaryota"/>
</dbReference>
<dbReference type="HOGENOM" id="CLU_064833_1_1_1"/>
<dbReference type="InParanoid" id="Q7Y0D4"/>
<dbReference type="OMA" id="DNTKWLP"/>
<dbReference type="OrthoDB" id="2121326at2759"/>
<dbReference type="Proteomes" id="UP000000763">
    <property type="component" value="Chromosome 3"/>
</dbReference>
<dbReference type="Proteomes" id="UP000059680">
    <property type="component" value="Chromosome 3"/>
</dbReference>
<dbReference type="GO" id="GO:0009535">
    <property type="term" value="C:chloroplast thylakoid membrane"/>
    <property type="evidence" value="ECO:0000318"/>
    <property type="project" value="GO_Central"/>
</dbReference>
<dbReference type="GO" id="GO:0016671">
    <property type="term" value="F:oxidoreductase activity, acting on a sulfur group of donors, disulfide as acceptor"/>
    <property type="evidence" value="ECO:0000318"/>
    <property type="project" value="GO_Central"/>
</dbReference>
<dbReference type="GO" id="GO:0010190">
    <property type="term" value="P:cytochrome b6f complex assembly"/>
    <property type="evidence" value="ECO:0000318"/>
    <property type="project" value="GO_Central"/>
</dbReference>
<dbReference type="CDD" id="cd02950">
    <property type="entry name" value="TxlA"/>
    <property type="match status" value="1"/>
</dbReference>
<dbReference type="FunFam" id="3.40.30.10:FF:000145">
    <property type="entry name" value="thioredoxin-like protein HCF164, chloroplastic"/>
    <property type="match status" value="1"/>
</dbReference>
<dbReference type="Gene3D" id="3.40.30.10">
    <property type="entry name" value="Glutaredoxin"/>
    <property type="match status" value="1"/>
</dbReference>
<dbReference type="InterPro" id="IPR036249">
    <property type="entry name" value="Thioredoxin-like_sf"/>
</dbReference>
<dbReference type="InterPro" id="IPR013766">
    <property type="entry name" value="Thioredoxin_domain"/>
</dbReference>
<dbReference type="InterPro" id="IPR044241">
    <property type="entry name" value="TxlA/HCF164"/>
</dbReference>
<dbReference type="PANTHER" id="PTHR47353">
    <property type="entry name" value="THIOREDOXIN-LIKE PROTEIN HCF164, CHLOROPLASTIC"/>
    <property type="match status" value="1"/>
</dbReference>
<dbReference type="PANTHER" id="PTHR47353:SF1">
    <property type="entry name" value="THIOREDOXIN-LIKE PROTEIN HCF164, CHLOROPLASTIC"/>
    <property type="match status" value="1"/>
</dbReference>
<dbReference type="Pfam" id="PF00085">
    <property type="entry name" value="Thioredoxin"/>
    <property type="match status" value="1"/>
</dbReference>
<dbReference type="SUPFAM" id="SSF52833">
    <property type="entry name" value="Thioredoxin-like"/>
    <property type="match status" value="1"/>
</dbReference>
<dbReference type="PROSITE" id="PS51352">
    <property type="entry name" value="THIOREDOXIN_2"/>
    <property type="match status" value="1"/>
</dbReference>
<organism>
    <name type="scientific">Oryza sativa subsp. japonica</name>
    <name type="common">Rice</name>
    <dbReference type="NCBI Taxonomy" id="39947"/>
    <lineage>
        <taxon>Eukaryota</taxon>
        <taxon>Viridiplantae</taxon>
        <taxon>Streptophyta</taxon>
        <taxon>Embryophyta</taxon>
        <taxon>Tracheophyta</taxon>
        <taxon>Spermatophyta</taxon>
        <taxon>Magnoliopsida</taxon>
        <taxon>Liliopsida</taxon>
        <taxon>Poales</taxon>
        <taxon>Poaceae</taxon>
        <taxon>BOP clade</taxon>
        <taxon>Oryzoideae</taxon>
        <taxon>Oryzeae</taxon>
        <taxon>Oryzinae</taxon>
        <taxon>Oryza</taxon>
        <taxon>Oryza sativa</taxon>
    </lineage>
</organism>
<comment type="function">
    <text>Probable thiol-disulfide oxidoreductase that may participate in various redox reactions in the chloroplast.</text>
</comment>
<comment type="subcellular location">
    <subcellularLocation>
        <location evidence="4">Plastid</location>
        <location evidence="4">Chloroplast</location>
    </subcellularLocation>
</comment>
<comment type="similarity">
    <text evidence="4">Belongs to the thioredoxin family.</text>
</comment>
<comment type="caution">
    <text evidence="4">The active site contains a CEVC motif which differs from the conserved CGPC motif.</text>
</comment>
<evidence type="ECO:0000255" key="1"/>
<evidence type="ECO:0000255" key="2">
    <source>
        <dbReference type="PROSITE-ProRule" id="PRU00691"/>
    </source>
</evidence>
<evidence type="ECO:0000256" key="3">
    <source>
        <dbReference type="SAM" id="MobiDB-lite"/>
    </source>
</evidence>
<evidence type="ECO:0000305" key="4"/>
<accession>Q7Y0D4</accession>
<accession>A0A0P0W3G7</accession>